<comment type="function">
    <text evidence="1">Involved in the binding of tRNA to the ribosomes.</text>
</comment>
<comment type="subunit">
    <text evidence="1">Part of the 30S ribosomal subunit.</text>
</comment>
<comment type="similarity">
    <text evidence="1">Belongs to the universal ribosomal protein uS10 family.</text>
</comment>
<organism>
    <name type="scientific">Legionella pneumophila (strain Corby)</name>
    <dbReference type="NCBI Taxonomy" id="400673"/>
    <lineage>
        <taxon>Bacteria</taxon>
        <taxon>Pseudomonadati</taxon>
        <taxon>Pseudomonadota</taxon>
        <taxon>Gammaproteobacteria</taxon>
        <taxon>Legionellales</taxon>
        <taxon>Legionellaceae</taxon>
        <taxon>Legionella</taxon>
    </lineage>
</organism>
<proteinExistence type="inferred from homology"/>
<gene>
    <name evidence="1" type="primary">rpsJ</name>
    <name type="ordered locus">LPC_3014</name>
</gene>
<accession>A5IHR5</accession>
<name>RS10_LEGPC</name>
<evidence type="ECO:0000255" key="1">
    <source>
        <dbReference type="HAMAP-Rule" id="MF_00508"/>
    </source>
</evidence>
<evidence type="ECO:0000305" key="2"/>
<dbReference type="EMBL" id="CP000675">
    <property type="protein sequence ID" value="ABQ56915.1"/>
    <property type="molecule type" value="Genomic_DNA"/>
</dbReference>
<dbReference type="RefSeq" id="WP_010946077.1">
    <property type="nucleotide sequence ID" value="NZ_JAPMSS010000006.1"/>
</dbReference>
<dbReference type="SMR" id="A5IHR5"/>
<dbReference type="GeneID" id="57034331"/>
<dbReference type="KEGG" id="lpc:LPC_3014"/>
<dbReference type="HOGENOM" id="CLU_122625_1_3_6"/>
<dbReference type="GO" id="GO:1990904">
    <property type="term" value="C:ribonucleoprotein complex"/>
    <property type="evidence" value="ECO:0007669"/>
    <property type="project" value="UniProtKB-KW"/>
</dbReference>
<dbReference type="GO" id="GO:0005840">
    <property type="term" value="C:ribosome"/>
    <property type="evidence" value="ECO:0007669"/>
    <property type="project" value="UniProtKB-KW"/>
</dbReference>
<dbReference type="GO" id="GO:0003735">
    <property type="term" value="F:structural constituent of ribosome"/>
    <property type="evidence" value="ECO:0007669"/>
    <property type="project" value="InterPro"/>
</dbReference>
<dbReference type="GO" id="GO:0000049">
    <property type="term" value="F:tRNA binding"/>
    <property type="evidence" value="ECO:0007669"/>
    <property type="project" value="UniProtKB-UniRule"/>
</dbReference>
<dbReference type="GO" id="GO:0006412">
    <property type="term" value="P:translation"/>
    <property type="evidence" value="ECO:0007669"/>
    <property type="project" value="UniProtKB-UniRule"/>
</dbReference>
<dbReference type="FunFam" id="3.30.70.600:FF:000001">
    <property type="entry name" value="30S ribosomal protein S10"/>
    <property type="match status" value="1"/>
</dbReference>
<dbReference type="Gene3D" id="3.30.70.600">
    <property type="entry name" value="Ribosomal protein S10 domain"/>
    <property type="match status" value="1"/>
</dbReference>
<dbReference type="HAMAP" id="MF_00508">
    <property type="entry name" value="Ribosomal_uS10"/>
    <property type="match status" value="1"/>
</dbReference>
<dbReference type="InterPro" id="IPR001848">
    <property type="entry name" value="Ribosomal_uS10"/>
</dbReference>
<dbReference type="InterPro" id="IPR027486">
    <property type="entry name" value="Ribosomal_uS10_dom"/>
</dbReference>
<dbReference type="InterPro" id="IPR036838">
    <property type="entry name" value="Ribosomal_uS10_dom_sf"/>
</dbReference>
<dbReference type="NCBIfam" id="NF001861">
    <property type="entry name" value="PRK00596.1"/>
    <property type="match status" value="1"/>
</dbReference>
<dbReference type="NCBIfam" id="TIGR01049">
    <property type="entry name" value="rpsJ_bact"/>
    <property type="match status" value="1"/>
</dbReference>
<dbReference type="PANTHER" id="PTHR11700">
    <property type="entry name" value="30S RIBOSOMAL PROTEIN S10 FAMILY MEMBER"/>
    <property type="match status" value="1"/>
</dbReference>
<dbReference type="Pfam" id="PF00338">
    <property type="entry name" value="Ribosomal_S10"/>
    <property type="match status" value="1"/>
</dbReference>
<dbReference type="PRINTS" id="PR00971">
    <property type="entry name" value="RIBOSOMALS10"/>
</dbReference>
<dbReference type="SMART" id="SM01403">
    <property type="entry name" value="Ribosomal_S10"/>
    <property type="match status" value="1"/>
</dbReference>
<dbReference type="SUPFAM" id="SSF54999">
    <property type="entry name" value="Ribosomal protein S10"/>
    <property type="match status" value="1"/>
</dbReference>
<reference key="1">
    <citation type="submission" date="2006-11" db="EMBL/GenBank/DDBJ databases">
        <title>Identification and characterization of a new conjugation/ type IVA secretion system (trb/tra) of L. pneumophila Corby localized on a mobile genomic island.</title>
        <authorList>
            <person name="Gloeckner G."/>
            <person name="Albert-Weissenberger C."/>
            <person name="Weinmann E."/>
            <person name="Jacobi S."/>
            <person name="Schunder E."/>
            <person name="Steinert M."/>
            <person name="Buchrieser C."/>
            <person name="Hacker J."/>
            <person name="Heuner K."/>
        </authorList>
    </citation>
    <scope>NUCLEOTIDE SEQUENCE [LARGE SCALE GENOMIC DNA]</scope>
    <source>
        <strain>Corby</strain>
    </source>
</reference>
<protein>
    <recommendedName>
        <fullName evidence="1">Small ribosomal subunit protein uS10</fullName>
    </recommendedName>
    <alternativeName>
        <fullName evidence="2">30S ribosomal protein S10</fullName>
    </alternativeName>
</protein>
<sequence length="105" mass="11938">MSSNQNIKIRLKSFDHRLIDLSTREIVDTAKRTGAQIRGPIPLPIRKEKFTVLTSPHVNKDARDQYELRTHKRLVVIVHPTEKTVDALMKLDLAAGVDVQISLDD</sequence>
<feature type="chain" id="PRO_1000015043" description="Small ribosomal subunit protein uS10">
    <location>
        <begin position="1"/>
        <end position="105"/>
    </location>
</feature>
<keyword id="KW-0687">Ribonucleoprotein</keyword>
<keyword id="KW-0689">Ribosomal protein</keyword>